<proteinExistence type="evidence at protein level"/>
<feature type="peptide" id="PRO_0000371740" description="Signiferin-2.1" evidence="1">
    <location>
        <begin position="1"/>
        <end position="15"/>
    </location>
</feature>
<feature type="modified residue" description="Leucine amide" evidence="1">
    <location>
        <position position="15"/>
    </location>
</feature>
<sequence length="15" mass="1550">IIGHLIKTALGMLGL</sequence>
<organism>
    <name type="scientific">Crinia signifera</name>
    <name type="common">Common eastern froglet</name>
    <dbReference type="NCBI Taxonomy" id="326986"/>
    <lineage>
        <taxon>Eukaryota</taxon>
        <taxon>Metazoa</taxon>
        <taxon>Chordata</taxon>
        <taxon>Craniata</taxon>
        <taxon>Vertebrata</taxon>
        <taxon>Euteleostomi</taxon>
        <taxon>Amphibia</taxon>
        <taxon>Batrachia</taxon>
        <taxon>Anura</taxon>
        <taxon>Neobatrachia</taxon>
        <taxon>Myobatrachoidea</taxon>
        <taxon>Myobatrachidae</taxon>
        <taxon>Myobatrachinae</taxon>
        <taxon>Crinia</taxon>
    </lineage>
</organism>
<protein>
    <recommendedName>
        <fullName evidence="4">Signiferin-2.1</fullName>
    </recommendedName>
</protein>
<reference evidence="5" key="1">
    <citation type="journal article" date="2004" name="Rapid Commun. Mass Spectrom.">
        <title>Host-defence skin peptides of the Australian common froglet Crinia signifera: sequence determination using positive and negative ion electrospray mass spectra.</title>
        <authorList>
            <person name="Maselli V.M."/>
            <person name="Brinkworth C.S."/>
            <person name="Bowie J.H."/>
            <person name="Tyler M.J."/>
        </authorList>
    </citation>
    <scope>PROTEIN SEQUENCE</scope>
    <scope>SUBCELLULAR LOCATION</scope>
    <scope>TISSUE SPECIFICITY</scope>
    <scope>AMIDATION AT LEU-15</scope>
    <source>
        <tissue evidence="1">Skin secretion</tissue>
    </source>
</reference>
<reference evidence="5" key="2">
    <citation type="journal article" date="2006" name="Rapid Commun. Mass Spectrom.">
        <title>Host-defence skin peptides of the Australian streambank froglet Crinia riparia: isolation and sequence determination by positive and negative ion electrospray mass spectrometry.</title>
        <authorList>
            <person name="Maselli V.M."/>
            <person name="Bilusich D."/>
            <person name="Bowie J.H."/>
            <person name="Tyler M.J."/>
        </authorList>
    </citation>
    <scope>FUNCTION</scope>
</reference>
<reference evidence="5" key="3">
    <citation type="journal article" date="2008" name="Regul. Pept.">
        <title>Disulfide-containing peptides from the glandular skin secretions of froglets of the genus Crinia: structure, activity and evolutionary trends.</title>
        <authorList>
            <person name="Jackway R.J."/>
            <person name="Pukala T.L."/>
            <person name="Maselli V.M."/>
            <person name="Musgrave I.F."/>
            <person name="Bowie J.H."/>
            <person name="Liu Y."/>
            <person name="Surinya-Johnson K.H."/>
            <person name="Donnellan S.C."/>
            <person name="Doyle J.R."/>
            <person name="Llewellyn L.E."/>
            <person name="Tyler M.J."/>
        </authorList>
    </citation>
    <scope>FUNCTION</scope>
    <scope>DISCUSSION OF SEQUENCE</scope>
</reference>
<evidence type="ECO:0000269" key="1">
    <source>
    </source>
</evidence>
<evidence type="ECO:0000269" key="2">
    <source>
    </source>
</evidence>
<evidence type="ECO:0000269" key="3">
    <source>
    </source>
</evidence>
<evidence type="ECO:0000303" key="4">
    <source>
    </source>
</evidence>
<evidence type="ECO:0000305" key="5"/>
<accession>P86131</accession>
<comment type="function">
    <text evidence="2 3">Has antibacterial activity against a wide spectrum of Gram-positive bacteria including B.cereus (MIC=25 uM), E.faecalis (MIC=100 uM), L.lactis (MIC=12 uM), L.innocua (MIC=50 uM), M.luteus (MIC=25 uM), S.aureus (MIC=12 uM), S.epidermidis (MIC=25 uM) and S.uberis (MIC=25 uM). Lacks antibacterial activity against the Gram-negative bacteria E.cloacae and E.coli. Inhibits the formation of NO by neuronal nitric oxide synthase with an IC(50) of 12.4 uM.</text>
</comment>
<comment type="subcellular location">
    <subcellularLocation>
        <location evidence="1">Secreted</location>
    </subcellularLocation>
</comment>
<comment type="tissue specificity">
    <text evidence="1">Expressed by the skin glands.</text>
</comment>
<keyword id="KW-0027">Amidation</keyword>
<keyword id="KW-0878">Amphibian defense peptide</keyword>
<keyword id="KW-0044">Antibiotic</keyword>
<keyword id="KW-0929">Antimicrobial</keyword>
<keyword id="KW-0903">Direct protein sequencing</keyword>
<keyword id="KW-0964">Secreted</keyword>
<name>SIG21_CRISI</name>
<dbReference type="GO" id="GO:0005576">
    <property type="term" value="C:extracellular region"/>
    <property type="evidence" value="ECO:0000314"/>
    <property type="project" value="UniProtKB"/>
</dbReference>
<dbReference type="GO" id="GO:0050830">
    <property type="term" value="P:defense response to Gram-positive bacterium"/>
    <property type="evidence" value="ECO:0000314"/>
    <property type="project" value="UniProtKB"/>
</dbReference>
<dbReference type="GO" id="GO:0051001">
    <property type="term" value="P:negative regulation of nitric-oxide synthase activity"/>
    <property type="evidence" value="ECO:0000314"/>
    <property type="project" value="UniProtKB"/>
</dbReference>